<evidence type="ECO:0000255" key="1">
    <source>
        <dbReference type="HAMAP-Rule" id="MF_00022"/>
    </source>
</evidence>
<proteinExistence type="inferred from homology"/>
<comment type="function">
    <text evidence="1">Catalyzes the attachment of glutamate to tRNA(Glu) in a two-step reaction: glutamate is first activated by ATP to form Glu-AMP and then transferred to the acceptor end of tRNA(Glu).</text>
</comment>
<comment type="catalytic activity">
    <reaction evidence="1">
        <text>tRNA(Glu) + L-glutamate + ATP = L-glutamyl-tRNA(Glu) + AMP + diphosphate</text>
        <dbReference type="Rhea" id="RHEA:23540"/>
        <dbReference type="Rhea" id="RHEA-COMP:9663"/>
        <dbReference type="Rhea" id="RHEA-COMP:9680"/>
        <dbReference type="ChEBI" id="CHEBI:29985"/>
        <dbReference type="ChEBI" id="CHEBI:30616"/>
        <dbReference type="ChEBI" id="CHEBI:33019"/>
        <dbReference type="ChEBI" id="CHEBI:78442"/>
        <dbReference type="ChEBI" id="CHEBI:78520"/>
        <dbReference type="ChEBI" id="CHEBI:456215"/>
        <dbReference type="EC" id="6.1.1.17"/>
    </reaction>
</comment>
<comment type="subunit">
    <text evidence="1">Monomer.</text>
</comment>
<comment type="subcellular location">
    <subcellularLocation>
        <location evidence="1">Cytoplasm</location>
    </subcellularLocation>
</comment>
<comment type="similarity">
    <text evidence="1">Belongs to the class-I aminoacyl-tRNA synthetase family. Glutamate--tRNA ligase type 1 subfamily.</text>
</comment>
<keyword id="KW-0030">Aminoacyl-tRNA synthetase</keyword>
<keyword id="KW-0067">ATP-binding</keyword>
<keyword id="KW-0963">Cytoplasm</keyword>
<keyword id="KW-0436">Ligase</keyword>
<keyword id="KW-0547">Nucleotide-binding</keyword>
<keyword id="KW-0648">Protein biosynthesis</keyword>
<keyword id="KW-1185">Reference proteome</keyword>
<reference key="1">
    <citation type="submission" date="2006-01" db="EMBL/GenBank/DDBJ databases">
        <title>Complete sequence of Rhodopseudomonas palustris HaA2.</title>
        <authorList>
            <consortium name="US DOE Joint Genome Institute"/>
            <person name="Copeland A."/>
            <person name="Lucas S."/>
            <person name="Lapidus A."/>
            <person name="Barry K."/>
            <person name="Detter J.C."/>
            <person name="Glavina T."/>
            <person name="Hammon N."/>
            <person name="Israni S."/>
            <person name="Pitluck S."/>
            <person name="Chain P."/>
            <person name="Malfatti S."/>
            <person name="Shin M."/>
            <person name="Vergez L."/>
            <person name="Schmutz J."/>
            <person name="Larimer F."/>
            <person name="Land M."/>
            <person name="Hauser L."/>
            <person name="Pelletier D.A."/>
            <person name="Kyrpides N."/>
            <person name="Anderson I."/>
            <person name="Oda Y."/>
            <person name="Harwood C.S."/>
            <person name="Richardson P."/>
        </authorList>
    </citation>
    <scope>NUCLEOTIDE SEQUENCE [LARGE SCALE GENOMIC DNA]</scope>
    <source>
        <strain>HaA2</strain>
    </source>
</reference>
<organism>
    <name type="scientific">Rhodopseudomonas palustris (strain HaA2)</name>
    <dbReference type="NCBI Taxonomy" id="316058"/>
    <lineage>
        <taxon>Bacteria</taxon>
        <taxon>Pseudomonadati</taxon>
        <taxon>Pseudomonadota</taxon>
        <taxon>Alphaproteobacteria</taxon>
        <taxon>Hyphomicrobiales</taxon>
        <taxon>Nitrobacteraceae</taxon>
        <taxon>Rhodopseudomonas</taxon>
    </lineage>
</organism>
<sequence>MTRPVVTRFAPSPTGFLHIGGGRTALFNWLYARKLGGKMLLRIEDTDRQRSTQPAIDAILDGLKWLGIEWDGDTVYQFARAARHREVAEQLLAAGKAYRCYATAEELTAMRDKARAEGRSKLYDGSWRDRDPSEAPADMKPTIRLKAPLDGETVIEDQVQGRVVWQNENLDDLVLLRGDGTPTYMLAVVVDDHDMDVTHVIRGDDHLINAARQKQIYDAMGWELPVMAHIPLIHGPDGSKLSKRHGALGVDAYRAMGYLPAALRNYLVRLGWSHGDQEIFTTQEMIDAFDLAAIGRSAARFDFAKLESLNGHYIRQSDDQSLVTLLEDLLHYVPQGPAIAARLTDTTRAQLVQAMPGLKERAKTLLELLDNAGFIFADRPLAIDAKGQAVLTPDIRALIGRLRTALEDVSPWTAATTEAAMRTFAEQAGLKLGAVAQPLRVALTGRTTSPGIFDVLAVLGREECLSRLADQAA</sequence>
<feature type="chain" id="PRO_1000001949" description="Glutamate--tRNA ligase">
    <location>
        <begin position="1"/>
        <end position="473"/>
    </location>
</feature>
<feature type="short sequence motif" description="'HIGH' region" evidence="1">
    <location>
        <begin position="11"/>
        <end position="21"/>
    </location>
</feature>
<feature type="short sequence motif" description="'KMSKS' region" evidence="1">
    <location>
        <begin position="240"/>
        <end position="244"/>
    </location>
</feature>
<feature type="binding site" evidence="1">
    <location>
        <position position="243"/>
    </location>
    <ligand>
        <name>ATP</name>
        <dbReference type="ChEBI" id="CHEBI:30616"/>
    </ligand>
</feature>
<accession>Q2IW96</accession>
<gene>
    <name evidence="1" type="primary">gltX</name>
    <name type="ordered locus">RPB_2812</name>
</gene>
<protein>
    <recommendedName>
        <fullName evidence="1">Glutamate--tRNA ligase</fullName>
        <ecNumber evidence="1">6.1.1.17</ecNumber>
    </recommendedName>
    <alternativeName>
        <fullName evidence="1">Glutamyl-tRNA synthetase</fullName>
        <shortName evidence="1">GluRS</shortName>
    </alternativeName>
</protein>
<name>SYE_RHOP2</name>
<dbReference type="EC" id="6.1.1.17" evidence="1"/>
<dbReference type="EMBL" id="CP000250">
    <property type="protein sequence ID" value="ABD07514.1"/>
    <property type="molecule type" value="Genomic_DNA"/>
</dbReference>
<dbReference type="RefSeq" id="WP_011441699.1">
    <property type="nucleotide sequence ID" value="NC_007778.1"/>
</dbReference>
<dbReference type="SMR" id="Q2IW96"/>
<dbReference type="STRING" id="316058.RPB_2812"/>
<dbReference type="KEGG" id="rpb:RPB_2812"/>
<dbReference type="eggNOG" id="COG0008">
    <property type="taxonomic scope" value="Bacteria"/>
</dbReference>
<dbReference type="HOGENOM" id="CLU_015768_6_3_5"/>
<dbReference type="OrthoDB" id="9807503at2"/>
<dbReference type="Proteomes" id="UP000008809">
    <property type="component" value="Chromosome"/>
</dbReference>
<dbReference type="GO" id="GO:0005829">
    <property type="term" value="C:cytosol"/>
    <property type="evidence" value="ECO:0007669"/>
    <property type="project" value="TreeGrafter"/>
</dbReference>
<dbReference type="GO" id="GO:0005524">
    <property type="term" value="F:ATP binding"/>
    <property type="evidence" value="ECO:0007669"/>
    <property type="project" value="UniProtKB-UniRule"/>
</dbReference>
<dbReference type="GO" id="GO:0004818">
    <property type="term" value="F:glutamate-tRNA ligase activity"/>
    <property type="evidence" value="ECO:0007669"/>
    <property type="project" value="UniProtKB-UniRule"/>
</dbReference>
<dbReference type="GO" id="GO:0000049">
    <property type="term" value="F:tRNA binding"/>
    <property type="evidence" value="ECO:0007669"/>
    <property type="project" value="InterPro"/>
</dbReference>
<dbReference type="GO" id="GO:0008270">
    <property type="term" value="F:zinc ion binding"/>
    <property type="evidence" value="ECO:0007669"/>
    <property type="project" value="InterPro"/>
</dbReference>
<dbReference type="GO" id="GO:0006424">
    <property type="term" value="P:glutamyl-tRNA aminoacylation"/>
    <property type="evidence" value="ECO:0007669"/>
    <property type="project" value="UniProtKB-UniRule"/>
</dbReference>
<dbReference type="CDD" id="cd00808">
    <property type="entry name" value="GluRS_core"/>
    <property type="match status" value="1"/>
</dbReference>
<dbReference type="FunFam" id="3.40.50.620:FF:000007">
    <property type="entry name" value="Glutamate--tRNA ligase"/>
    <property type="match status" value="1"/>
</dbReference>
<dbReference type="Gene3D" id="1.10.10.350">
    <property type="match status" value="1"/>
</dbReference>
<dbReference type="Gene3D" id="3.40.50.620">
    <property type="entry name" value="HUPs"/>
    <property type="match status" value="1"/>
</dbReference>
<dbReference type="HAMAP" id="MF_00022">
    <property type="entry name" value="Glu_tRNA_synth_type1"/>
    <property type="match status" value="1"/>
</dbReference>
<dbReference type="InterPro" id="IPR045462">
    <property type="entry name" value="aa-tRNA-synth_I_cd-bd"/>
</dbReference>
<dbReference type="InterPro" id="IPR020751">
    <property type="entry name" value="aa-tRNA-synth_I_codon-bd_sub2"/>
</dbReference>
<dbReference type="InterPro" id="IPR001412">
    <property type="entry name" value="aa-tRNA-synth_I_CS"/>
</dbReference>
<dbReference type="InterPro" id="IPR008925">
    <property type="entry name" value="aa_tRNA-synth_I_cd-bd_sf"/>
</dbReference>
<dbReference type="InterPro" id="IPR004527">
    <property type="entry name" value="Glu-tRNA-ligase_bac/mito"/>
</dbReference>
<dbReference type="InterPro" id="IPR000924">
    <property type="entry name" value="Glu/Gln-tRNA-synth"/>
</dbReference>
<dbReference type="InterPro" id="IPR020058">
    <property type="entry name" value="Glu/Gln-tRNA-synth_Ib_cat-dom"/>
</dbReference>
<dbReference type="InterPro" id="IPR049940">
    <property type="entry name" value="GluQ/Sye"/>
</dbReference>
<dbReference type="InterPro" id="IPR033910">
    <property type="entry name" value="GluRS_core"/>
</dbReference>
<dbReference type="InterPro" id="IPR014729">
    <property type="entry name" value="Rossmann-like_a/b/a_fold"/>
</dbReference>
<dbReference type="NCBIfam" id="TIGR00464">
    <property type="entry name" value="gltX_bact"/>
    <property type="match status" value="1"/>
</dbReference>
<dbReference type="PANTHER" id="PTHR43311">
    <property type="entry name" value="GLUTAMATE--TRNA LIGASE"/>
    <property type="match status" value="1"/>
</dbReference>
<dbReference type="PANTHER" id="PTHR43311:SF2">
    <property type="entry name" value="GLUTAMATE--TRNA LIGASE, MITOCHONDRIAL-RELATED"/>
    <property type="match status" value="1"/>
</dbReference>
<dbReference type="Pfam" id="PF19269">
    <property type="entry name" value="Anticodon_2"/>
    <property type="match status" value="1"/>
</dbReference>
<dbReference type="Pfam" id="PF00749">
    <property type="entry name" value="tRNA-synt_1c"/>
    <property type="match status" value="1"/>
</dbReference>
<dbReference type="PRINTS" id="PR00987">
    <property type="entry name" value="TRNASYNTHGLU"/>
</dbReference>
<dbReference type="SUPFAM" id="SSF48163">
    <property type="entry name" value="An anticodon-binding domain of class I aminoacyl-tRNA synthetases"/>
    <property type="match status" value="1"/>
</dbReference>
<dbReference type="SUPFAM" id="SSF52374">
    <property type="entry name" value="Nucleotidylyl transferase"/>
    <property type="match status" value="1"/>
</dbReference>
<dbReference type="PROSITE" id="PS00178">
    <property type="entry name" value="AA_TRNA_LIGASE_I"/>
    <property type="match status" value="1"/>
</dbReference>